<protein>
    <recommendedName>
        <fullName>RAC-beta serine/threonine-protein kinase</fullName>
        <ecNumber evidence="27 28">2.7.11.1</ecNumber>
    </recommendedName>
    <alternativeName>
        <fullName>Protein kinase Akt-2</fullName>
    </alternativeName>
    <alternativeName>
        <fullName>Protein kinase B beta</fullName>
        <shortName>PKB beta</shortName>
    </alternativeName>
    <alternativeName>
        <fullName>RAC-PK-beta</fullName>
    </alternativeName>
</protein>
<gene>
    <name type="primary">Akt2</name>
</gene>
<proteinExistence type="evidence at protein level"/>
<sequence>MNEVSVIKEGWLHKRGEYIKTWRPRYFLLKSDGSFIGYKERPEAPDQTLPPLNNFSVAECQLMKTERPRPNTFVIRCLQWTTVIERTFHVDSPDEREEWMRAIQMVANSLKQRGPGEDAMDYKCGSPSDSSTSEMMEVAVNKARAKVTMNDFDYLKLLGKGTFGKVILVREKATGRYYAMKILRKEVIIAKDEVAHTVTESRVLQNTRHPFLTALKYAFQTHDRLCFVMEYANGGELFFHLSRERVFTEDRARFYGAEIVSALEYLHSRDVVYRDIKLENLMLDKDGHIKITDFGLCKEGISDGATMKTFCGTPEYLAPEVLEDNDYGRAVDWWGLGVVMYEMMCGRLPFYNQDHERLFELILMEEIRFPRTLGPEAKSLLAGLLKKDPKQRLGGGPSDAKEVMEHRFFLSINWQDVVQKKLLPPFKPQVTSEVDTRYFDDEFTAQSITITPPDRYDSLDPLELDQRTHFPQFSYSASIRE</sequence>
<evidence type="ECO:0000250" key="1"/>
<evidence type="ECO:0000250" key="2">
    <source>
        <dbReference type="UniProtKB" id="P31749"/>
    </source>
</evidence>
<evidence type="ECO:0000250" key="3">
    <source>
        <dbReference type="UniProtKB" id="P31750"/>
    </source>
</evidence>
<evidence type="ECO:0000250" key="4">
    <source>
        <dbReference type="UniProtKB" id="P31751"/>
    </source>
</evidence>
<evidence type="ECO:0000255" key="5">
    <source>
        <dbReference type="PROSITE-ProRule" id="PRU00145"/>
    </source>
</evidence>
<evidence type="ECO:0000255" key="6">
    <source>
        <dbReference type="PROSITE-ProRule" id="PRU00159"/>
    </source>
</evidence>
<evidence type="ECO:0000255" key="7">
    <source>
        <dbReference type="PROSITE-ProRule" id="PRU00618"/>
    </source>
</evidence>
<evidence type="ECO:0000255" key="8">
    <source>
        <dbReference type="PROSITE-ProRule" id="PRU10027"/>
    </source>
</evidence>
<evidence type="ECO:0000269" key="9">
    <source>
    </source>
</evidence>
<evidence type="ECO:0000269" key="10">
    <source>
    </source>
</evidence>
<evidence type="ECO:0000269" key="11">
    <source>
    </source>
</evidence>
<evidence type="ECO:0000269" key="12">
    <source>
    </source>
</evidence>
<evidence type="ECO:0000269" key="13">
    <source>
    </source>
</evidence>
<evidence type="ECO:0000269" key="14">
    <source>
    </source>
</evidence>
<evidence type="ECO:0000269" key="15">
    <source>
    </source>
</evidence>
<evidence type="ECO:0000269" key="16">
    <source>
    </source>
</evidence>
<evidence type="ECO:0000269" key="17">
    <source>
    </source>
</evidence>
<evidence type="ECO:0000269" key="18">
    <source>
    </source>
</evidence>
<evidence type="ECO:0000269" key="19">
    <source>
    </source>
</evidence>
<evidence type="ECO:0000269" key="20">
    <source>
    </source>
</evidence>
<evidence type="ECO:0000269" key="21">
    <source>
    </source>
</evidence>
<evidence type="ECO:0000269" key="22">
    <source>
    </source>
</evidence>
<evidence type="ECO:0000269" key="23">
    <source>
    </source>
</evidence>
<evidence type="ECO:0000303" key="24">
    <source>
    </source>
</evidence>
<evidence type="ECO:0000303" key="25">
    <source>
    </source>
</evidence>
<evidence type="ECO:0000305" key="26"/>
<evidence type="ECO:0000305" key="27">
    <source>
    </source>
</evidence>
<evidence type="ECO:0000305" key="28">
    <source>
    </source>
</evidence>
<evidence type="ECO:0007744" key="29">
    <source>
    </source>
</evidence>
<organism>
    <name type="scientific">Mus musculus</name>
    <name type="common">Mouse</name>
    <dbReference type="NCBI Taxonomy" id="10090"/>
    <lineage>
        <taxon>Eukaryota</taxon>
        <taxon>Metazoa</taxon>
        <taxon>Chordata</taxon>
        <taxon>Craniata</taxon>
        <taxon>Vertebrata</taxon>
        <taxon>Euteleostomi</taxon>
        <taxon>Mammalia</taxon>
        <taxon>Eutheria</taxon>
        <taxon>Euarchontoglires</taxon>
        <taxon>Glires</taxon>
        <taxon>Rodentia</taxon>
        <taxon>Myomorpha</taxon>
        <taxon>Muroidea</taxon>
        <taxon>Muridae</taxon>
        <taxon>Murinae</taxon>
        <taxon>Mus</taxon>
        <taxon>Mus</taxon>
    </lineage>
</organism>
<reference key="1">
    <citation type="journal article" date="1995" name="Oncogene">
        <title>Cloning, chromosomal localization and expression analysis of the mouse Akt2 oncogene.</title>
        <authorList>
            <person name="Altomare D.A."/>
            <person name="Guo K."/>
            <person name="Cheng J.Q."/>
            <person name="Sonoda G."/>
            <person name="Walsh K."/>
            <person name="Testa J.R."/>
        </authorList>
    </citation>
    <scope>NUCLEOTIDE SEQUENCE [MRNA]</scope>
    <source>
        <strain>C57BL/6 X CBA</strain>
        <tissue>Thymus</tissue>
    </source>
</reference>
<reference key="2">
    <citation type="journal article" date="2004" name="Genome Res.">
        <title>The status, quality, and expansion of the NIH full-length cDNA project: the Mammalian Gene Collection (MGC).</title>
        <authorList>
            <consortium name="The MGC Project Team"/>
        </authorList>
    </citation>
    <scope>NUCLEOTIDE SEQUENCE [LARGE SCALE MRNA]</scope>
    <source>
        <tissue>Retina</tissue>
        <tissue>Salivary gland</tissue>
    </source>
</reference>
<reference key="3">
    <citation type="journal article" date="2006" name="Biochem. J.">
        <title>A WD-FYVE protein binds to the kinases Akt and PKCzeta/lambda.</title>
        <authorList>
            <person name="Fritzius T."/>
            <person name="Burkard G."/>
            <person name="Haas E."/>
            <person name="Heinrich J."/>
            <person name="Schweneker M."/>
            <person name="Bosse M."/>
            <person name="Zimmermann S."/>
            <person name="Frey A.D."/>
            <person name="Caelers A."/>
            <person name="Bachmann A.S."/>
            <person name="Moelling K."/>
        </authorList>
    </citation>
    <scope>INTERACTION WITH WDFY2</scope>
</reference>
<reference key="4">
    <citation type="journal article" date="2008" name="Cell. Signal.">
        <title>A novel Akt/PKB-interacting protein promotes cell adhesion and inhibits familial amyotrophic lateral sclerosis-linked mutant SOD1-induced neuronal death via inhibition of PP2A-mediated dephosphorylation of Akt/PKB.</title>
        <authorList>
            <person name="Nawa M."/>
            <person name="Kanekura K."/>
            <person name="Hashimoto Y."/>
            <person name="Aiso S."/>
            <person name="Matsuoka M."/>
        </authorList>
    </citation>
    <scope>INTERACTION WITH BTBD10</scope>
</reference>
<reference key="5">
    <citation type="journal article" date="2008" name="J. Cell. Physiol.">
        <title>Akt2 is implicated in skeletal muscle differentiation and specifically binds Prohibitin2/REA.</title>
        <authorList>
            <person name="Heron-Milhavet L."/>
            <person name="Mamaeva D."/>
            <person name="Rochat A."/>
            <person name="Lamb N.J."/>
            <person name="Fernandez A."/>
        </authorList>
    </citation>
    <scope>FUNCTION</scope>
    <scope>INTERACTION WITH PHB2</scope>
</reference>
<reference key="6">
    <citation type="journal article" date="2009" name="Mol. Cell. Biol.">
        <title>ClipR-59 interacts with Akt and regulates Akt cellular compartmentalization.</title>
        <authorList>
            <person name="Ding J."/>
            <person name="Du K."/>
        </authorList>
    </citation>
    <scope>INTERACTION WITH CLIP3</scope>
    <scope>SUBCELLULAR LOCATION</scope>
</reference>
<reference key="7">
    <citation type="journal article" date="2010" name="Cell">
        <title>A tissue-specific atlas of mouse protein phosphorylation and expression.</title>
        <authorList>
            <person name="Huttlin E.L."/>
            <person name="Jedrychowski M.P."/>
            <person name="Elias J.E."/>
            <person name="Goswami T."/>
            <person name="Rad R."/>
            <person name="Beausoleil S.A."/>
            <person name="Villen J."/>
            <person name="Haas W."/>
            <person name="Sowa M.E."/>
            <person name="Gygi S.P."/>
        </authorList>
    </citation>
    <scope>PHOSPHORYLATION [LARGE SCALE ANALYSIS] AT SER-126 AND THR-451</scope>
    <scope>IDENTIFICATION BY MASS SPECTROMETRY [LARGE SCALE ANALYSIS]</scope>
    <source>
        <tissue>Brain</tissue>
        <tissue>Brown adipose tissue</tissue>
        <tissue>Heart</tissue>
        <tissue>Kidney</tissue>
        <tissue>Liver</tissue>
        <tissue>Lung</tissue>
        <tissue>Pancreas</tissue>
        <tissue>Spleen</tissue>
        <tissue>Testis</tissue>
    </source>
</reference>
<reference key="8">
    <citation type="journal article" date="2010" name="Cell Death Differ.">
        <title>Akt2-mediated phosphorylation of Pitx2 controls Ccnd1 mRNA decay during muscle cell differentiation.</title>
        <authorList>
            <person name="Gherzi R."/>
            <person name="Trabucchi M."/>
            <person name="Ponassi M."/>
            <person name="Gallouzi I.E."/>
            <person name="Rosenfeld M.G."/>
            <person name="Briata P."/>
        </authorList>
    </citation>
    <scope>FUNCTION</scope>
</reference>
<reference key="9">
    <citation type="journal article" date="2010" name="Cell Metab.">
        <title>Cdc2-like kinase 2 is an insulin-regulated suppressor of hepatic gluconeogenesis.</title>
        <authorList>
            <person name="Rodgers J.T."/>
            <person name="Haas W."/>
            <person name="Gygi S.P."/>
            <person name="Puigserver P."/>
        </authorList>
    </citation>
    <scope>FUNCTION</scope>
</reference>
<reference key="10">
    <citation type="journal article" date="2010" name="J. Biol. Chem.">
        <title>Isoform-specific regulation of Akt signaling by the endosomal protein WDFY2.</title>
        <authorList>
            <person name="Walz H.A."/>
            <person name="Shi X."/>
            <person name="Chouinard M."/>
            <person name="Bue C.A."/>
            <person name="Navaroli D.M."/>
            <person name="Hayakawa A."/>
            <person name="Zhou Q.L."/>
            <person name="Nadler J."/>
            <person name="Leonard D.M."/>
            <person name="Corvera S."/>
        </authorList>
    </citation>
    <scope>INTERACTION WITH WDFY2</scope>
    <scope>SUBCELLULAR LOCATION</scope>
</reference>
<reference key="11">
    <citation type="journal article" date="2011" name="Cell Metab.">
        <title>C2 domain-containing phosphoprotein CDP138 regulates GLUT4 insertion into the plasma membrane.</title>
        <authorList>
            <person name="Xie X."/>
            <person name="Gong Z."/>
            <person name="Mansuy-Aubert V."/>
            <person name="Zhou Q.L."/>
            <person name="Tatulian S.A."/>
            <person name="Sehrt D."/>
            <person name="Gnad F."/>
            <person name="Brill L.M."/>
            <person name="Motamedchaboki K."/>
            <person name="Chen Y."/>
            <person name="Czech M.P."/>
            <person name="Mann M."/>
            <person name="Kruger M."/>
            <person name="Jiang Z.Y."/>
        </authorList>
    </citation>
    <scope>FUNCTION IN PHOSPHORYLATION OF C2CD5</scope>
</reference>
<reference key="12">
    <citation type="journal article" date="2011" name="Cell. Signal.">
        <title>Akt signalling in health and disease.</title>
        <authorList>
            <person name="Hers I."/>
            <person name="Vincent E.E."/>
            <person name="Tavare J.M."/>
        </authorList>
    </citation>
    <scope>REVIEW ON FUNCTION</scope>
</reference>
<reference key="13">
    <citation type="journal article" date="2011" name="Histol. Histopathol.">
        <title>Akt1 and Akt2: differentiating the aktion.</title>
        <authorList>
            <person name="Heron-Milhavet L."/>
            <person name="Khouya N."/>
            <person name="Fernandez A."/>
            <person name="Lamb N.J."/>
        </authorList>
    </citation>
    <scope>REVIEW ON FUNCTION</scope>
</reference>
<reference key="14">
    <citation type="journal article" date="2011" name="Mol. Biol. Cell">
        <title>Ankrd2/ARPP is a novel Akt2 specific substrate and regulates myogenic differentiation upon cellular exposure to H(2)O(2).</title>
        <authorList>
            <person name="Cenni V."/>
            <person name="Bavelloni A."/>
            <person name="Beretti F."/>
            <person name="Tagliavini F."/>
            <person name="Manzoli L."/>
            <person name="Lattanzi G."/>
            <person name="Maraldi N.M."/>
            <person name="Cocco L."/>
            <person name="Marmiroli S."/>
        </authorList>
    </citation>
    <scope>FUNCTION</scope>
</reference>
<reference key="15">
    <citation type="journal article" date="2011" name="Sci. Signal.">
        <title>Akt determines cell fate through inhibition of the PERK-eIF2alpha phosphorylation pathway.</title>
        <authorList>
            <person name="Mounir Z."/>
            <person name="Krishnamoorthy J.L."/>
            <person name="Wang S."/>
            <person name="Papadopoulou B."/>
            <person name="Campbell S."/>
            <person name="Muller W.J."/>
            <person name="Hatzoglou M."/>
            <person name="Koromilas A.E."/>
        </authorList>
    </citation>
    <scope>FUNCTION</scope>
</reference>
<reference key="16">
    <citation type="journal article" date="2013" name="BMC Biochem.">
        <title>KCTD20, a relative of BTBD10, is a positive regulator of Akt.</title>
        <authorList>
            <person name="Nawa M."/>
            <person name="Matsuoka M."/>
        </authorList>
    </citation>
    <scope>INTERACTION WITH KCTD20</scope>
</reference>
<reference key="17">
    <citation type="journal article" date="2014" name="Nature">
        <title>Cell-cycle-regulated activation of Akt kinase by phosphorylation at its carboxyl terminus.</title>
        <authorList>
            <person name="Liu P."/>
            <person name="Begley M."/>
            <person name="Michowski W."/>
            <person name="Inuzuka H."/>
            <person name="Ginzberg M."/>
            <person name="Gao D."/>
            <person name="Tsou P."/>
            <person name="Gan W."/>
            <person name="Papa A."/>
            <person name="Kim B.M."/>
            <person name="Wan L."/>
            <person name="Singh A."/>
            <person name="Zhai B."/>
            <person name="Yuan M."/>
            <person name="Wang Z."/>
            <person name="Gygi S.P."/>
            <person name="Lee T.H."/>
            <person name="Lu K.P."/>
            <person name="Toker A."/>
            <person name="Pandolfi P.P."/>
            <person name="Asara J.M."/>
            <person name="Kirschner M.W."/>
            <person name="Sicinski P."/>
            <person name="Cantley L."/>
            <person name="Wei W."/>
        </authorList>
    </citation>
    <scope>PHOSPHORYLATION AT SER-478</scope>
    <scope>MUTAGENESIS OF SER-478</scope>
</reference>
<reference key="18">
    <citation type="journal article" date="2015" name="J. Biol. Chem.">
        <title>Alternative activation mechanisms of protein kinase B trigger distinct downstream signaling responses.</title>
        <authorList>
            <person name="Balzano D."/>
            <person name="Fawal M.A."/>
            <person name="Velazquez J.V."/>
            <person name="Santiveri C.M."/>
            <person name="Yang J."/>
            <person name="Pastor J."/>
            <person name="Campos-Olivas R."/>
            <person name="Djouder N."/>
            <person name="Lietha D."/>
        </authorList>
    </citation>
    <scope>FUNCTION</scope>
    <scope>CATALYTIC ACTIVITY</scope>
    <scope>PHOSPHORYLATION AT THR-309</scope>
</reference>
<reference key="19">
    <citation type="journal article" date="2018" name="J. Cell Sci.">
        <title>14-3-3 proteins regulate desmosomal adhesion via plakophilins.</title>
        <authorList>
            <person name="Rietscher K."/>
            <person name="Keil R."/>
            <person name="Jordan A."/>
            <person name="Hatzfeld M."/>
        </authorList>
    </citation>
    <scope>FUNCTION</scope>
</reference>
<reference key="20">
    <citation type="journal article" date="2019" name="J. Biol. Chem.">
        <title>Serine 474 phosphorylation is essential for maximal Akt2 kinase activity in adipocytes.</title>
        <authorList>
            <person name="Kearney A.L."/>
            <person name="Cooke K.C."/>
            <person name="Norris D.M."/>
            <person name="Zadoorian A."/>
            <person name="Krycer J.R."/>
            <person name="Fazakerley D.J."/>
            <person name="Burchfield J.G."/>
            <person name="James D.E."/>
        </authorList>
    </citation>
    <scope>FUNCTION</scope>
    <scope>CATALYTIC ACTIVITY</scope>
    <scope>ACTIVITY REGULATION</scope>
    <scope>PHOSPHORYLATION AT THR-309 AND SER-474</scope>
    <scope>MUTAGENESIS OF TRP-80 AND SER-474</scope>
</reference>
<keyword id="KW-0007">Acetylation</keyword>
<keyword id="KW-0053">Apoptosis</keyword>
<keyword id="KW-0067">ATP-binding</keyword>
<keyword id="KW-0119">Carbohydrate metabolism</keyword>
<keyword id="KW-1003">Cell membrane</keyword>
<keyword id="KW-0963">Cytoplasm</keyword>
<keyword id="KW-0217">Developmental protein</keyword>
<keyword id="KW-1015">Disulfide bond</keyword>
<keyword id="KW-0967">Endosome</keyword>
<keyword id="KW-0313">Glucose metabolism</keyword>
<keyword id="KW-0320">Glycogen biosynthesis</keyword>
<keyword id="KW-0321">Glycogen metabolism</keyword>
<keyword id="KW-0325">Glycoprotein</keyword>
<keyword id="KW-0418">Kinase</keyword>
<keyword id="KW-0464">Manganese</keyword>
<keyword id="KW-0472">Membrane</keyword>
<keyword id="KW-0479">Metal-binding</keyword>
<keyword id="KW-0547">Nucleotide-binding</keyword>
<keyword id="KW-0539">Nucleus</keyword>
<keyword id="KW-0597">Phosphoprotein</keyword>
<keyword id="KW-1185">Reference proteome</keyword>
<keyword id="KW-0723">Serine/threonine-protein kinase</keyword>
<keyword id="KW-0762">Sugar transport</keyword>
<keyword id="KW-0808">Transferase</keyword>
<keyword id="KW-0810">Translation regulation</keyword>
<keyword id="KW-0813">Transport</keyword>
<keyword id="KW-0832">Ubl conjugation</keyword>
<comment type="function">
    <text evidence="4 18 21 22 23 24 25">AKT2 is one of 3 closely related serine/threonine-protein kinases (AKT1, AKT2 and AKT3) called the AKT kinases, and which regulate many processes including metabolism, proliferation, cell survival, growth and angiogenesis (PubMed:21954288, PubMed:26286748, PubMed:29678907, PubMed:31548312). This is mediated through serine and/or threonine phosphorylation of a range of downstream substrates. Over 100 substrate candidates have been reported so far, but for most of them, no isoform specificity has been reported (PubMed:21954288, PubMed:26286748, PubMed:29678907, PubMed:31548312). AKT is responsible of the regulation of glucose uptake by mediating insulin-induced translocation of the SLC2A4/GLUT4 glucose transporter to the cell surface (PubMed:26286748, PubMed:31548312). Phosphorylation of PTPN1 at 'Ser-50' negatively modulates its phosphatase activity preventing dephosphorylation of the insulin receptor and the attenuation of insulin signaling. Phosphorylation of TBC1D4 triggers the binding of this effector to inhibitory 14-3-3 proteins, which is required for insulin-stimulated glucose transport. AKT also regulates the storage of glucose in the form of glycogen by phosphorylating GSK3A at 'Ser-21' and GSK3B at 'Ser-9', resulting in inhibition of its kinase activity. Phosphorylation of GSK3 isoforms by AKT is also thought to be one mechanism by which cell proliferation is driven. AKT also regulates cell survival via the phosphorylation of MAP3K5 (apoptosis signal-related kinase). Phosphorylation of 'Ser-83' decreases MAP3K5 kinase activity stimulated by oxidative stress and thereby prevents apoptosis. AKT mediates insulin-stimulated protein synthesis by phosphorylating TSC2 at 'Ser-939' and 'Thr-1462', thereby activating mTORC1 signaling and leading to both phosphorylation of 4E-BP1 and in activation of RPS6KB1. AKT is involved in the phosphorylation of members of the FOXO factors (Forkhead family of transcription factors), leading to binding of 14-3-3 proteins and cytoplasmic localization (PubMed:31548312). In particular, FOXO1 is phosphorylated at 'Thr-24', 'Ser-256' and 'Ser-319'. FOXO3 and FOXO4 are phosphorylated on equivalent sites. AKT has an important role in the regulation of NF-kappa-B-dependent gene transcription and positively regulates the activity of CREB1 (cyclic AMP (cAMP)-response element binding protein). The phosphorylation of CREB1 induces the binding of accessory proteins that are necessary for the transcription of pro-survival genes such as BCL2 and MCL1. AKT phosphorylates 'Ser-454' on ATP citrate lyase (ACLY), thereby potentially regulating ACLY activity and fatty acid synthesis. Activates the 3B isoform of cyclic nucleotide phosphodiesterase (PDE3B) via phosphorylation of 'Ser-273', resulting in reduced cyclic AMP levels and inhibition of lipolysis. Phosphorylates PIKFYVE on 'Ser-318', which results in increased PI(3)P-5 activity. The Rho GTPase-activating protein DLC1 is another substrate and its phosphorylation is implicated in the regulation cell proliferation and cell growth. AKT plays a role as key modulator of the AKT-mTOR signaling pathway controlling the tempo of the process of newborn neurons integration during adult neurogenesis, including correct neuron positioning, dendritic development and synapse formation. Signals downstream of phosphatidylinositol 3-kinase (PI(3)K) to mediate the effects of various growth factors such as platelet-derived growth factor (PDGF), epidermal growth factor (EGF), insulin and insulin-like growth factor I (IGF-I). AKT mediates the antiapoptotic effects of IGF-I. Essential for the SPATA13-mediated regulation of cell migration and adhesion assembly and disassembly. May be involved in the regulation of the placental development (PubMed:21432781, PubMed:21620960). In response to lysophosphatidic acid stimulation, inhibits the ciliogenesis cascade. In this context, phosphorylates WDR44, hence stabilizing its interaction with Rab11 and preventing the formation of the ciliogenic Rab11-FIP3-RAB3IP complex. Also phosphorylates RAB3IP/Rabin8, thus may affect RAB3IP guanine nucleotide exchange factor (GEF) activity toward Rab8, which is important for cilia growth (By similarity). Phosphorylates PKP1, facilitating its interaction with YWHAG and translocation to the nucleus, ultimately resulting in a reduction in keratinocyte intercellular adhesion (PubMed:29678907). Phosphorylation of PKP1 increases PKP1 protein stability, translocation to the cytoplasm away from desmosome plaques and PKP1-driven cap-dependent translation (By similarity).</text>
</comment>
<comment type="function">
    <text evidence="10 13 14 16 17">Several AKT2-specific substrates have been identified, including ANKRD2, C2CD5, CLK2 and PITX2. May play a role in myoblast differentiation (PubMed:17565718). In this context, may act through PITX2 phosphorylation. Unphosphorylated PITX2 associates with an ELAVL1/HuR-containing complex, which stabilizes cyclin mRNA and ensuring cell proliferation. Phosphorylation by AKT2 impairs this association, leading to CCND1 mRNA destabilization and progression towards differentiation (PubMed:20019746). Also involved in the negative regulation of myogenesis in response to stress conditions. In this context, acts by phosphorylating ANKRD2 (PubMed:21737686). May also be a key regulator of glucose uptake. Regulates insulin-stimulated glucose transport by the increase of glucose transporter GLUT4 translocation from intracellular stores to the plasma membrane. In this context, acts by phosphorylating C2CD5/CDP138 on 'Ser-197' in insulin-stimulated adipocytes (PubMed:21907143). Through the phosphorylation of CLK2 on 'Thr-343', involved in insulin-regulated suppression of hepatic gluconeogenesis (PubMed:20074525).</text>
</comment>
<comment type="catalytic activity">
    <reaction evidence="27 28">
        <text>L-seryl-[protein] + ATP = O-phospho-L-seryl-[protein] + ADP + H(+)</text>
        <dbReference type="Rhea" id="RHEA:17989"/>
        <dbReference type="Rhea" id="RHEA-COMP:9863"/>
        <dbReference type="Rhea" id="RHEA-COMP:11604"/>
        <dbReference type="ChEBI" id="CHEBI:15378"/>
        <dbReference type="ChEBI" id="CHEBI:29999"/>
        <dbReference type="ChEBI" id="CHEBI:30616"/>
        <dbReference type="ChEBI" id="CHEBI:83421"/>
        <dbReference type="ChEBI" id="CHEBI:456216"/>
        <dbReference type="EC" id="2.7.11.1"/>
    </reaction>
</comment>
<comment type="catalytic activity">
    <reaction evidence="27 28">
        <text>L-threonyl-[protein] + ATP = O-phospho-L-threonyl-[protein] + ADP + H(+)</text>
        <dbReference type="Rhea" id="RHEA:46608"/>
        <dbReference type="Rhea" id="RHEA-COMP:11060"/>
        <dbReference type="Rhea" id="RHEA-COMP:11605"/>
        <dbReference type="ChEBI" id="CHEBI:15378"/>
        <dbReference type="ChEBI" id="CHEBI:30013"/>
        <dbReference type="ChEBI" id="CHEBI:30616"/>
        <dbReference type="ChEBI" id="CHEBI:61977"/>
        <dbReference type="ChEBI" id="CHEBI:456216"/>
        <dbReference type="EC" id="2.7.11.1"/>
    </reaction>
</comment>
<comment type="activity regulation">
    <text evidence="4 23">Two specific sites, one in the kinase domain (Thr-309) and the other in the C-terminal regulatory region (Ser-474), need to be phosphorylated for its full activation (PubMed:31548312). AKT2 phosphorylation of PKP1 is induced by insulin (By similarity). Inhibited by Akt inhibitor MK2206 (PubMed:31548312).</text>
</comment>
<comment type="subunit">
    <text evidence="4 9 10 11 12 15 19">Interacts with BTBD10 (PubMed:18160256). Interacts with KCTD20 (PubMed:24156551). Interacts (via PH domain) with MTCP1, TCL1A and TCL1B; this interaction may facilitate AKT2 oligomerization and phosphorylation, hence increasing kinase activity (By similarity). Interacts with PHB2; this interaction may be important for myogenic differentiation (PubMed:17565718). Interacts (when phosphorylated) with CLIP3/ClipR-59; this interaction promotes cell membrane localization (PubMed:19139280). Interacts with WDFY2 (via WD repeats 1-3) (PubMed:16792529, PubMed:20189988).</text>
</comment>
<comment type="subcellular location">
    <subcellularLocation>
        <location evidence="15">Cytoplasm</location>
    </subcellularLocation>
    <subcellularLocation>
        <location evidence="15">Nucleus</location>
    </subcellularLocation>
    <subcellularLocation>
        <location evidence="1">Cell membrane</location>
        <topology evidence="1">Peripheral membrane protein</topology>
    </subcellularLocation>
    <subcellularLocation>
        <location evidence="15">Early endosome</location>
    </subcellularLocation>
    <text evidence="4 15">Through binding of the N-terminal PH domain to phosphatidylinositol (3,4,5)-trisphosphate (PtdIns(3,4,5)P3) or phosphatidylinositol (3,4)-bisphosphate (PtdIns(3,4)P2), recruited to the plasma membrane. Cell membrane recruitment is facilitated by interaction with CLIP3. Colocalizes with WDFY2 in early endosomes (PubMed:20189988). Localizes within both nucleus and cytoplasm in proliferative primary myoblasts and mostly within the nucleus of differentiated primary myoblasts (By similarity).</text>
</comment>
<comment type="domain">
    <text evidence="25">Binding of the PH domain to phosphatidylinositol 3,4,5-trisphosphate (PtdIns(3,4,5)P3) following phosphatidylinositol 3-kinase alpha (PIK3CA) activation results in AKT2 recruitment to the plasma membrane, exposition of a pair of serine and threonine residues for phosphorylation by membrane-associated PDPK1/PDK1 and activation.</text>
</comment>
<comment type="PTM">
    <text evidence="20 21 23">Phosphorylation on Thr-309 and Ser-474 is required for full activity (PubMed:26286748, PubMed:31548312). Phosphorylation of the activation loop at Thr-309 by PDPK1/PDK1 is a prerequisite for full activation (PubMed:26286748). Phosphorylated and activated by PDPK1/PDK1 in the presence of phosphatidylinositol 3,4,5-trisphosphate (PubMed:26286748). Phosphorylation by mTORC2 in response to growth factors plays a key role in AKT1 activation: mTORC2 phosphorylates different sites depending on the context, such as Ser-474 or Ser-478, thereby facilitating subsequent phosphorylation of the activation loop by PDPK1/PDK1 (PubMed:24670654, PubMed:31548312).</text>
</comment>
<comment type="PTM">
    <text evidence="4">Ubiquitinated; undergoes both 'Lys-48'- and 'Lys-63'-linked polyubiquitination. TRAF6-induced 'Lys-63'-linked AKT2 ubiquitination. When fully phosphorylated and translocated into the nucleus, undergoes 'Lys-48'-polyubiquitination catalyzed by TTC3, leading to its degradation by the proteasome.</text>
</comment>
<comment type="PTM">
    <text evidence="2">O-GlcNAcylation at Thr-306 and Thr-313 inhibits activating phosphorylation at Thr-309 via disrupting the interaction between AKT and PDPK1/PDK1.</text>
</comment>
<comment type="similarity">
    <text evidence="26">Belongs to the protein kinase superfamily. AGC Ser/Thr protein kinase family. RAC subfamily.</text>
</comment>
<comment type="caution">
    <text evidence="26">In light of strong identity in the primary amino acid sequence, the 3 AKT kinases were long surmised to play redundant and overlapping roles. However, it is now known that each AKT may display specific functions in different cellular events and diseases. AKT1 is more specifically involved in cellular survival pathways, by inhibiting apoptotic processes; whereas AKT2 is more specific for the insulin receptor signaling pathway. Moreover, while AKT1 and AKT2 are often implicated in many aspects of cellular transformation, the 2 isoforms act in a complementary opposing manner. The role of AKT3 is less clear, though it appears to be predominantly expressed in brain.</text>
</comment>
<feature type="chain" id="PRO_0000085609" description="RAC-beta serine/threonine-protein kinase">
    <location>
        <begin position="1"/>
        <end position="481"/>
    </location>
</feature>
<feature type="domain" description="PH" evidence="5">
    <location>
        <begin position="5"/>
        <end position="108"/>
    </location>
</feature>
<feature type="domain" description="Protein kinase" evidence="6">
    <location>
        <begin position="152"/>
        <end position="409"/>
    </location>
</feature>
<feature type="domain" description="AGC-kinase C-terminal" evidence="7">
    <location>
        <begin position="410"/>
        <end position="481"/>
    </location>
</feature>
<feature type="active site" description="Proton acceptor" evidence="6 8">
    <location>
        <position position="275"/>
    </location>
</feature>
<feature type="binding site" evidence="6">
    <location>
        <begin position="158"/>
        <end position="166"/>
    </location>
    <ligand>
        <name>ATP</name>
        <dbReference type="ChEBI" id="CHEBI:30616"/>
    </ligand>
</feature>
<feature type="binding site" evidence="6">
    <location>
        <position position="181"/>
    </location>
    <ligand>
        <name>ATP</name>
        <dbReference type="ChEBI" id="CHEBI:30616"/>
    </ligand>
</feature>
<feature type="binding site" evidence="4">
    <location>
        <position position="280"/>
    </location>
    <ligand>
        <name>Mn(2+)</name>
        <dbReference type="ChEBI" id="CHEBI:29035"/>
    </ligand>
</feature>
<feature type="binding site" evidence="4">
    <location>
        <position position="293"/>
    </location>
    <ligand>
        <name>Mn(2+)</name>
        <dbReference type="ChEBI" id="CHEBI:29035"/>
    </ligand>
</feature>
<feature type="modified residue" description="N-acetylmethionine" evidence="4">
    <location>
        <position position="1"/>
    </location>
</feature>
<feature type="modified residue" description="Phosphoserine" evidence="4">
    <location>
        <position position="34"/>
    </location>
</feature>
<feature type="modified residue" description="Phosphoserine" evidence="29">
    <location>
        <position position="126"/>
    </location>
</feature>
<feature type="modified residue" description="Phosphothreonine; by PDPK1" evidence="21 23">
    <location>
        <position position="309"/>
    </location>
</feature>
<feature type="modified residue" description="Phosphoserine" evidence="4">
    <location>
        <position position="447"/>
    </location>
</feature>
<feature type="modified residue" description="Phosphothreonine" evidence="29">
    <location>
        <position position="451"/>
    </location>
</feature>
<feature type="modified residue" description="Phosphoserine; by MTOR" evidence="23">
    <location>
        <position position="474"/>
    </location>
</feature>
<feature type="modified residue" description="Phosphoserine; by MTOR" evidence="20">
    <location>
        <position position="478"/>
    </location>
</feature>
<feature type="glycosylation site" description="O-linked (GlcNAc) serine" evidence="2">
    <location>
        <position position="128"/>
    </location>
</feature>
<feature type="glycosylation site" description="O-linked (GlcNAc) serine" evidence="2">
    <location>
        <position position="131"/>
    </location>
</feature>
<feature type="glycosylation site" description="O-linked (GlcNAc) threonine" evidence="2">
    <location>
        <position position="306"/>
    </location>
</feature>
<feature type="glycosylation site" description="O-linked (GlcNAc) threonine" evidence="2">
    <location>
        <position position="313"/>
    </location>
</feature>
<feature type="glycosylation site" description="O-linked (GlcNAc) serine; alternate" evidence="3">
    <location>
        <position position="474"/>
    </location>
</feature>
<feature type="disulfide bond" evidence="2">
    <location>
        <begin position="60"/>
        <end position="77"/>
    </location>
</feature>
<feature type="disulfide bond" evidence="4">
    <location>
        <begin position="297"/>
        <end position="311"/>
    </location>
</feature>
<feature type="mutagenesis site" description="Abolished inhbition by MK2206." evidence="23">
    <original>W</original>
    <variation>A</variation>
    <location>
        <position position="80"/>
    </location>
</feature>
<feature type="mutagenesis site" description="Decreased phosphorylation leading to decreased activity." evidence="23">
    <original>S</original>
    <variation>A</variation>
    <location>
        <position position="474"/>
    </location>
</feature>
<feature type="mutagenesis site" description="Mimics phosphorylation, promoting activity." evidence="20">
    <original>S</original>
    <variation>D</variation>
    <location>
        <position position="478"/>
    </location>
</feature>
<accession>Q60823</accession>
<name>AKT2_MOUSE</name>
<dbReference type="EC" id="2.7.11.1" evidence="27 28"/>
<dbReference type="EMBL" id="U22445">
    <property type="protein sequence ID" value="AAA83557.1"/>
    <property type="molecule type" value="mRNA"/>
</dbReference>
<dbReference type="EMBL" id="BC026151">
    <property type="protein sequence ID" value="AAH26151.1"/>
    <property type="molecule type" value="mRNA"/>
</dbReference>
<dbReference type="EMBL" id="BC040377">
    <property type="protein sequence ID" value="AAH40377.1"/>
    <property type="molecule type" value="mRNA"/>
</dbReference>
<dbReference type="CCDS" id="CCDS21027.1"/>
<dbReference type="RefSeq" id="NP_001103678.1">
    <property type="nucleotide sequence ID" value="NM_001110208.2"/>
</dbReference>
<dbReference type="RefSeq" id="NP_001318037.1">
    <property type="nucleotide sequence ID" value="NM_001331108.1"/>
</dbReference>
<dbReference type="RefSeq" id="NP_001318038.1">
    <property type="nucleotide sequence ID" value="NM_001331109.1"/>
</dbReference>
<dbReference type="RefSeq" id="NP_031460.1">
    <property type="nucleotide sequence ID" value="NM_007434.4"/>
</dbReference>
<dbReference type="RefSeq" id="XP_006539540.1">
    <property type="nucleotide sequence ID" value="XM_006539477.1"/>
</dbReference>
<dbReference type="RefSeq" id="XP_006539543.1">
    <property type="nucleotide sequence ID" value="XM_006539480.1"/>
</dbReference>
<dbReference type="RefSeq" id="XP_006539544.1">
    <property type="nucleotide sequence ID" value="XM_006539481.5"/>
</dbReference>
<dbReference type="RefSeq" id="XP_030097857.1">
    <property type="nucleotide sequence ID" value="XM_030241997.2"/>
</dbReference>
<dbReference type="RefSeq" id="XP_030097858.1">
    <property type="nucleotide sequence ID" value="XM_030241998.1"/>
</dbReference>
<dbReference type="RefSeq" id="XP_030097859.1">
    <property type="nucleotide sequence ID" value="XM_030241999.1"/>
</dbReference>
<dbReference type="RefSeq" id="XP_030097860.1">
    <property type="nucleotide sequence ID" value="XM_030242000.2"/>
</dbReference>
<dbReference type="BMRB" id="Q60823"/>
<dbReference type="SMR" id="Q60823"/>
<dbReference type="BioGRID" id="198057">
    <property type="interactions" value="17"/>
</dbReference>
<dbReference type="CORUM" id="Q60823"/>
<dbReference type="FunCoup" id="Q60823">
    <property type="interactions" value="3532"/>
</dbReference>
<dbReference type="IntAct" id="Q60823">
    <property type="interactions" value="25"/>
</dbReference>
<dbReference type="STRING" id="10090.ENSMUSP00000103981"/>
<dbReference type="ChEMBL" id="CHEMBL5382"/>
<dbReference type="GlyCosmos" id="Q60823">
    <property type="glycosylation" value="4 sites, No reported glycans"/>
</dbReference>
<dbReference type="GlyGen" id="Q60823">
    <property type="glycosylation" value="5 sites, 1 O-linked glycan (1 site)"/>
</dbReference>
<dbReference type="iPTMnet" id="Q60823"/>
<dbReference type="PhosphoSitePlus" id="Q60823"/>
<dbReference type="jPOST" id="Q60823"/>
<dbReference type="PaxDb" id="10090-ENSMUSP00000103981"/>
<dbReference type="ProteomicsDB" id="296016"/>
<dbReference type="Pumba" id="Q60823"/>
<dbReference type="Antibodypedia" id="3775">
    <property type="antibodies" value="1663 antibodies from 49 providers"/>
</dbReference>
<dbReference type="DNASU" id="11652"/>
<dbReference type="Ensembl" id="ENSMUST00000051356.12">
    <property type="protein sequence ID" value="ENSMUSP00000052103.6"/>
    <property type="gene ID" value="ENSMUSG00000004056.17"/>
</dbReference>
<dbReference type="Ensembl" id="ENSMUST00000108343.8">
    <property type="protein sequence ID" value="ENSMUSP00000103980.2"/>
    <property type="gene ID" value="ENSMUSG00000004056.17"/>
</dbReference>
<dbReference type="Ensembl" id="ENSMUST00000108344.9">
    <property type="protein sequence ID" value="ENSMUSP00000103981.3"/>
    <property type="gene ID" value="ENSMUSG00000004056.17"/>
</dbReference>
<dbReference type="GeneID" id="11652"/>
<dbReference type="KEGG" id="mmu:11652"/>
<dbReference type="UCSC" id="uc009fwr.2">
    <property type="organism name" value="mouse"/>
</dbReference>
<dbReference type="AGR" id="MGI:104874"/>
<dbReference type="CTD" id="208"/>
<dbReference type="MGI" id="MGI:104874">
    <property type="gene designation" value="Akt2"/>
</dbReference>
<dbReference type="VEuPathDB" id="HostDB:ENSMUSG00000004056"/>
<dbReference type="eggNOG" id="KOG0690">
    <property type="taxonomic scope" value="Eukaryota"/>
</dbReference>
<dbReference type="GeneTree" id="ENSGT00940000157189"/>
<dbReference type="HOGENOM" id="CLU_000288_11_0_1"/>
<dbReference type="InParanoid" id="Q60823"/>
<dbReference type="OMA" id="DRCECLG"/>
<dbReference type="OrthoDB" id="63267at2759"/>
<dbReference type="PhylomeDB" id="Q60823"/>
<dbReference type="TreeFam" id="TF102004"/>
<dbReference type="BRENDA" id="2.7.11.1">
    <property type="organism ID" value="3474"/>
</dbReference>
<dbReference type="Reactome" id="R-MMU-1257604">
    <property type="pathway name" value="PIP3 activates AKT signaling"/>
</dbReference>
<dbReference type="Reactome" id="R-MMU-1358803">
    <property type="pathway name" value="Downregulation of ERBB2:ERBB3 signaling"/>
</dbReference>
<dbReference type="Reactome" id="R-MMU-165158">
    <property type="pathway name" value="Activation of AKT2"/>
</dbReference>
<dbReference type="Reactome" id="R-MMU-165181">
    <property type="pathway name" value="Inhibition of TSC complex formation by PKB"/>
</dbReference>
<dbReference type="Reactome" id="R-MMU-198323">
    <property type="pathway name" value="AKT phosphorylates targets in the cytosol"/>
</dbReference>
<dbReference type="Reactome" id="R-MMU-198693">
    <property type="pathway name" value="AKT phosphorylates targets in the nucleus"/>
</dbReference>
<dbReference type="Reactome" id="R-MMU-199418">
    <property type="pathway name" value="Negative regulation of the PI3K/AKT network"/>
</dbReference>
<dbReference type="Reactome" id="R-MMU-211163">
    <property type="pathway name" value="AKT-mediated inactivation of FOXO1A"/>
</dbReference>
<dbReference type="Reactome" id="R-MMU-3769402">
    <property type="pathway name" value="Deactivation of the beta-catenin transactivating complex"/>
</dbReference>
<dbReference type="Reactome" id="R-MMU-389357">
    <property type="pathway name" value="CD28 dependent PI3K/Akt signaling"/>
</dbReference>
<dbReference type="Reactome" id="R-MMU-389513">
    <property type="pathway name" value="Co-inhibition by CTLA4"/>
</dbReference>
<dbReference type="Reactome" id="R-MMU-392451">
    <property type="pathway name" value="G beta:gamma signalling through PI3Kgamma"/>
</dbReference>
<dbReference type="Reactome" id="R-MMU-5218920">
    <property type="pathway name" value="VEGFR2 mediated vascular permeability"/>
</dbReference>
<dbReference type="Reactome" id="R-MMU-5628897">
    <property type="pathway name" value="TP53 Regulates Metabolic Genes"/>
</dbReference>
<dbReference type="Reactome" id="R-MMU-6804757">
    <property type="pathway name" value="Regulation of TP53 Degradation"/>
</dbReference>
<dbReference type="Reactome" id="R-MMU-6804758">
    <property type="pathway name" value="Regulation of TP53 Activity through Acetylation"/>
</dbReference>
<dbReference type="Reactome" id="R-MMU-6804759">
    <property type="pathway name" value="Regulation of TP53 Activity through Association with Co-factors"/>
</dbReference>
<dbReference type="Reactome" id="R-MMU-69202">
    <property type="pathway name" value="Cyclin E associated events during G1/S transition"/>
</dbReference>
<dbReference type="Reactome" id="R-MMU-69656">
    <property type="pathway name" value="Cyclin A:Cdk2-associated events at S phase entry"/>
</dbReference>
<dbReference type="Reactome" id="R-MMU-8876198">
    <property type="pathway name" value="RAB GEFs exchange GTP for GDP on RABs"/>
</dbReference>
<dbReference type="Reactome" id="R-MMU-8948751">
    <property type="pathway name" value="Regulation of PTEN stability and activity"/>
</dbReference>
<dbReference type="Reactome" id="R-MMU-9607240">
    <property type="pathway name" value="FLT3 Signaling"/>
</dbReference>
<dbReference type="Reactome" id="R-MMU-9614399">
    <property type="pathway name" value="Regulation of localization of FOXO transcription factors"/>
</dbReference>
<dbReference type="Reactome" id="R-MMU-9634638">
    <property type="pathway name" value="Estrogen-dependent nuclear events downstream of ESR-membrane signaling"/>
</dbReference>
<dbReference type="Reactome" id="R-MMU-9755511">
    <property type="pathway name" value="KEAP1-NFE2L2 pathway"/>
</dbReference>
<dbReference type="BioGRID-ORCS" id="11652">
    <property type="hits" value="4 hits in 84 CRISPR screens"/>
</dbReference>
<dbReference type="ChiTaRS" id="Akt2">
    <property type="organism name" value="mouse"/>
</dbReference>
<dbReference type="PRO" id="PR:Q60823"/>
<dbReference type="Proteomes" id="UP000000589">
    <property type="component" value="Chromosome 7"/>
</dbReference>
<dbReference type="RNAct" id="Q60823">
    <property type="molecule type" value="protein"/>
</dbReference>
<dbReference type="Bgee" id="ENSMUSG00000004056">
    <property type="expression patterns" value="Expressed in hindlimb stylopod muscle and 228 other cell types or tissues"/>
</dbReference>
<dbReference type="ExpressionAtlas" id="Q60823">
    <property type="expression patterns" value="baseline and differential"/>
</dbReference>
<dbReference type="GO" id="GO:0005938">
    <property type="term" value="C:cell cortex"/>
    <property type="evidence" value="ECO:0000315"/>
    <property type="project" value="UniProtKB"/>
</dbReference>
<dbReference type="GO" id="GO:0005737">
    <property type="term" value="C:cytoplasm"/>
    <property type="evidence" value="ECO:0000250"/>
    <property type="project" value="UniProtKB"/>
</dbReference>
<dbReference type="GO" id="GO:0005829">
    <property type="term" value="C:cytosol"/>
    <property type="evidence" value="ECO:0007669"/>
    <property type="project" value="Ensembl"/>
</dbReference>
<dbReference type="GO" id="GO:0005769">
    <property type="term" value="C:early endosome"/>
    <property type="evidence" value="ECO:0007669"/>
    <property type="project" value="UniProtKB-SubCell"/>
</dbReference>
<dbReference type="GO" id="GO:0005654">
    <property type="term" value="C:nucleoplasm"/>
    <property type="evidence" value="ECO:0007669"/>
    <property type="project" value="Ensembl"/>
</dbReference>
<dbReference type="GO" id="GO:0005886">
    <property type="term" value="C:plasma membrane"/>
    <property type="evidence" value="ECO:0000315"/>
    <property type="project" value="UniProtKB"/>
</dbReference>
<dbReference type="GO" id="GO:0032587">
    <property type="term" value="C:ruffle membrane"/>
    <property type="evidence" value="ECO:0000315"/>
    <property type="project" value="UniProtKB"/>
</dbReference>
<dbReference type="GO" id="GO:0005524">
    <property type="term" value="F:ATP binding"/>
    <property type="evidence" value="ECO:0007669"/>
    <property type="project" value="UniProtKB-KW"/>
</dbReference>
<dbReference type="GO" id="GO:0046872">
    <property type="term" value="F:metal ion binding"/>
    <property type="evidence" value="ECO:0007669"/>
    <property type="project" value="UniProtKB-KW"/>
</dbReference>
<dbReference type="GO" id="GO:0004672">
    <property type="term" value="F:protein kinase activity"/>
    <property type="evidence" value="ECO:0000314"/>
    <property type="project" value="MGI"/>
</dbReference>
<dbReference type="GO" id="GO:0106310">
    <property type="term" value="F:protein serine kinase activity"/>
    <property type="evidence" value="ECO:0007669"/>
    <property type="project" value="RHEA"/>
</dbReference>
<dbReference type="GO" id="GO:0004674">
    <property type="term" value="F:protein serine/threonine kinase activity"/>
    <property type="evidence" value="ECO:0000314"/>
    <property type="project" value="UniProtKB"/>
</dbReference>
<dbReference type="GO" id="GO:0071486">
    <property type="term" value="P:cellular response to high light intensity"/>
    <property type="evidence" value="ECO:0000315"/>
    <property type="project" value="MGI"/>
</dbReference>
<dbReference type="GO" id="GO:0032869">
    <property type="term" value="P:cellular response to insulin stimulus"/>
    <property type="evidence" value="ECO:0000266"/>
    <property type="project" value="MGI"/>
</dbReference>
<dbReference type="GO" id="GO:0006006">
    <property type="term" value="P:glucose metabolic process"/>
    <property type="evidence" value="ECO:0000315"/>
    <property type="project" value="MGI"/>
</dbReference>
<dbReference type="GO" id="GO:0005978">
    <property type="term" value="P:glycogen biosynthetic process"/>
    <property type="evidence" value="ECO:0007669"/>
    <property type="project" value="UniProtKB-KW"/>
</dbReference>
<dbReference type="GO" id="GO:0008286">
    <property type="term" value="P:insulin receptor signaling pathway"/>
    <property type="evidence" value="ECO:0000314"/>
    <property type="project" value="MGI"/>
</dbReference>
<dbReference type="GO" id="GO:0010748">
    <property type="term" value="P:negative regulation of long-chain fatty acid import across plasma membrane"/>
    <property type="evidence" value="ECO:0007669"/>
    <property type="project" value="Ensembl"/>
</dbReference>
<dbReference type="GO" id="GO:1903898">
    <property type="term" value="P:negative regulation of PERK-mediated unfolded protein response"/>
    <property type="evidence" value="ECO:0000314"/>
    <property type="project" value="UniProtKB"/>
</dbReference>
<dbReference type="GO" id="GO:0032287">
    <property type="term" value="P:peripheral nervous system myelin maintenance"/>
    <property type="evidence" value="ECO:0000315"/>
    <property type="project" value="MGI"/>
</dbReference>
<dbReference type="GO" id="GO:1903676">
    <property type="term" value="P:positive regulation of cap-dependent translational initiation"/>
    <property type="evidence" value="ECO:0000250"/>
    <property type="project" value="UniProtKB"/>
</dbReference>
<dbReference type="GO" id="GO:0030335">
    <property type="term" value="P:positive regulation of cell migration"/>
    <property type="evidence" value="ECO:0007669"/>
    <property type="project" value="Ensembl"/>
</dbReference>
<dbReference type="GO" id="GO:0046326">
    <property type="term" value="P:positive regulation of D-glucose import"/>
    <property type="evidence" value="ECO:0000316"/>
    <property type="project" value="MGI"/>
</dbReference>
<dbReference type="GO" id="GO:0032000">
    <property type="term" value="P:positive regulation of fatty acid beta-oxidation"/>
    <property type="evidence" value="ECO:0007669"/>
    <property type="project" value="Ensembl"/>
</dbReference>
<dbReference type="GO" id="GO:0045725">
    <property type="term" value="P:positive regulation of glycogen biosynthetic process"/>
    <property type="evidence" value="ECO:0007669"/>
    <property type="project" value="Ensembl"/>
</dbReference>
<dbReference type="GO" id="GO:0090314">
    <property type="term" value="P:positive regulation of protein targeting to membrane"/>
    <property type="evidence" value="ECO:0000315"/>
    <property type="project" value="UniProtKB"/>
</dbReference>
<dbReference type="GO" id="GO:0010765">
    <property type="term" value="P:positive regulation of sodium ion transport"/>
    <property type="evidence" value="ECO:0000266"/>
    <property type="project" value="MGI"/>
</dbReference>
<dbReference type="GO" id="GO:0034504">
    <property type="term" value="P:protein localization to nucleus"/>
    <property type="evidence" value="ECO:0000315"/>
    <property type="project" value="MGI"/>
</dbReference>
<dbReference type="GO" id="GO:0072659">
    <property type="term" value="P:protein localization to plasma membrane"/>
    <property type="evidence" value="ECO:0000316"/>
    <property type="project" value="MGI"/>
</dbReference>
<dbReference type="GO" id="GO:0050821">
    <property type="term" value="P:protein stabilization"/>
    <property type="evidence" value="ECO:0000250"/>
    <property type="project" value="UniProtKB"/>
</dbReference>
<dbReference type="GO" id="GO:0097473">
    <property type="term" value="P:retinal rod cell apoptotic process"/>
    <property type="evidence" value="ECO:0000315"/>
    <property type="project" value="MGI"/>
</dbReference>
<dbReference type="CDD" id="cd01241">
    <property type="entry name" value="PH_PKB"/>
    <property type="match status" value="1"/>
</dbReference>
<dbReference type="CDD" id="cd05595">
    <property type="entry name" value="STKc_PKB_beta"/>
    <property type="match status" value="1"/>
</dbReference>
<dbReference type="FunFam" id="1.10.510.10:FF:000033">
    <property type="entry name" value="Non-specific serine/threonine protein kinase"/>
    <property type="match status" value="1"/>
</dbReference>
<dbReference type="FunFam" id="2.30.29.30:FF:000027">
    <property type="entry name" value="Non-specific serine/threonine protein kinase"/>
    <property type="match status" value="1"/>
</dbReference>
<dbReference type="FunFam" id="3.30.200.20:FF:000838">
    <property type="entry name" value="Non-specific serine/threonine protein kinase"/>
    <property type="match status" value="1"/>
</dbReference>
<dbReference type="Gene3D" id="3.30.200.20">
    <property type="entry name" value="Phosphorylase Kinase, domain 1"/>
    <property type="match status" value="1"/>
</dbReference>
<dbReference type="Gene3D" id="2.30.29.30">
    <property type="entry name" value="Pleckstrin-homology domain (PH domain)/Phosphotyrosine-binding domain (PTB)"/>
    <property type="match status" value="1"/>
</dbReference>
<dbReference type="Gene3D" id="1.10.510.10">
    <property type="entry name" value="Transferase(Phosphotransferase) domain 1"/>
    <property type="match status" value="1"/>
</dbReference>
<dbReference type="InterPro" id="IPR000961">
    <property type="entry name" value="AGC-kinase_C"/>
</dbReference>
<dbReference type="InterPro" id="IPR034677">
    <property type="entry name" value="Akt2"/>
</dbReference>
<dbReference type="InterPro" id="IPR011009">
    <property type="entry name" value="Kinase-like_dom_sf"/>
</dbReference>
<dbReference type="InterPro" id="IPR011993">
    <property type="entry name" value="PH-like_dom_sf"/>
</dbReference>
<dbReference type="InterPro" id="IPR001849">
    <property type="entry name" value="PH_domain"/>
</dbReference>
<dbReference type="InterPro" id="IPR039026">
    <property type="entry name" value="PH_PKB"/>
</dbReference>
<dbReference type="InterPro" id="IPR017892">
    <property type="entry name" value="Pkinase_C"/>
</dbReference>
<dbReference type="InterPro" id="IPR000719">
    <property type="entry name" value="Prot_kinase_dom"/>
</dbReference>
<dbReference type="InterPro" id="IPR017441">
    <property type="entry name" value="Protein_kinase_ATP_BS"/>
</dbReference>
<dbReference type="InterPro" id="IPR008271">
    <property type="entry name" value="Ser/Thr_kinase_AS"/>
</dbReference>
<dbReference type="PANTHER" id="PTHR24351">
    <property type="entry name" value="RIBOSOMAL PROTEIN S6 KINASE"/>
    <property type="match status" value="1"/>
</dbReference>
<dbReference type="Pfam" id="PF00169">
    <property type="entry name" value="PH"/>
    <property type="match status" value="1"/>
</dbReference>
<dbReference type="Pfam" id="PF00069">
    <property type="entry name" value="Pkinase"/>
    <property type="match status" value="1"/>
</dbReference>
<dbReference type="Pfam" id="PF00433">
    <property type="entry name" value="Pkinase_C"/>
    <property type="match status" value="1"/>
</dbReference>
<dbReference type="SMART" id="SM00233">
    <property type="entry name" value="PH"/>
    <property type="match status" value="1"/>
</dbReference>
<dbReference type="SMART" id="SM00133">
    <property type="entry name" value="S_TK_X"/>
    <property type="match status" value="1"/>
</dbReference>
<dbReference type="SMART" id="SM00220">
    <property type="entry name" value="S_TKc"/>
    <property type="match status" value="1"/>
</dbReference>
<dbReference type="SUPFAM" id="SSF50729">
    <property type="entry name" value="PH domain-like"/>
    <property type="match status" value="1"/>
</dbReference>
<dbReference type="SUPFAM" id="SSF56112">
    <property type="entry name" value="Protein kinase-like (PK-like)"/>
    <property type="match status" value="1"/>
</dbReference>
<dbReference type="PROSITE" id="PS51285">
    <property type="entry name" value="AGC_KINASE_CTER"/>
    <property type="match status" value="1"/>
</dbReference>
<dbReference type="PROSITE" id="PS50003">
    <property type="entry name" value="PH_DOMAIN"/>
    <property type="match status" value="1"/>
</dbReference>
<dbReference type="PROSITE" id="PS00107">
    <property type="entry name" value="PROTEIN_KINASE_ATP"/>
    <property type="match status" value="1"/>
</dbReference>
<dbReference type="PROSITE" id="PS50011">
    <property type="entry name" value="PROTEIN_KINASE_DOM"/>
    <property type="match status" value="1"/>
</dbReference>
<dbReference type="PROSITE" id="PS00108">
    <property type="entry name" value="PROTEIN_KINASE_ST"/>
    <property type="match status" value="1"/>
</dbReference>